<evidence type="ECO:0000255" key="1">
    <source>
        <dbReference type="HAMAP-Rule" id="MF_01547"/>
    </source>
</evidence>
<evidence type="ECO:0000256" key="2">
    <source>
        <dbReference type="SAM" id="MobiDB-lite"/>
    </source>
</evidence>
<name>RLME_DESOH</name>
<organism>
    <name type="scientific">Desulfosudis oleivorans (strain DSM 6200 / JCM 39069 / Hxd3)</name>
    <name type="common">Desulfococcus oleovorans</name>
    <dbReference type="NCBI Taxonomy" id="96561"/>
    <lineage>
        <taxon>Bacteria</taxon>
        <taxon>Pseudomonadati</taxon>
        <taxon>Thermodesulfobacteriota</taxon>
        <taxon>Desulfobacteria</taxon>
        <taxon>Desulfobacterales</taxon>
        <taxon>Desulfosudaceae</taxon>
        <taxon>Desulfosudis</taxon>
    </lineage>
</organism>
<sequence length="207" mass="22988">MKRDPTKGRKTPDHYARKAKTEHYPARSVYKLQEIQKKHNVLKPGNAVLDLGCFPGSWMMFAAETVGRGGKVTGIDLKKVATHMPAQATSLQEDIYEIDREALAGTLGPLDVVLSDMAPDTMGNKFTDAARSFHLAAAALDLALFLLKPGGHFVCKVFQGEDFQNFVNMVKAEFERHKVFKPETCRKDSKETYVIGFSKKESTHVGS</sequence>
<keyword id="KW-0963">Cytoplasm</keyword>
<keyword id="KW-0489">Methyltransferase</keyword>
<keyword id="KW-1185">Reference proteome</keyword>
<keyword id="KW-0698">rRNA processing</keyword>
<keyword id="KW-0949">S-adenosyl-L-methionine</keyword>
<keyword id="KW-0808">Transferase</keyword>
<dbReference type="EC" id="2.1.1.166" evidence="1"/>
<dbReference type="EMBL" id="CP000859">
    <property type="protein sequence ID" value="ABW66182.1"/>
    <property type="molecule type" value="Genomic_DNA"/>
</dbReference>
<dbReference type="RefSeq" id="WP_012173801.1">
    <property type="nucleotide sequence ID" value="NC_009943.1"/>
</dbReference>
<dbReference type="SMR" id="A8ZT18"/>
<dbReference type="STRING" id="96561.Dole_0372"/>
<dbReference type="KEGG" id="dol:Dole_0372"/>
<dbReference type="eggNOG" id="COG0293">
    <property type="taxonomic scope" value="Bacteria"/>
</dbReference>
<dbReference type="HOGENOM" id="CLU_009422_4_0_7"/>
<dbReference type="OrthoDB" id="9790080at2"/>
<dbReference type="Proteomes" id="UP000008561">
    <property type="component" value="Chromosome"/>
</dbReference>
<dbReference type="GO" id="GO:0005737">
    <property type="term" value="C:cytoplasm"/>
    <property type="evidence" value="ECO:0007669"/>
    <property type="project" value="UniProtKB-SubCell"/>
</dbReference>
<dbReference type="GO" id="GO:0008650">
    <property type="term" value="F:rRNA (uridine-2'-O-)-methyltransferase activity"/>
    <property type="evidence" value="ECO:0007669"/>
    <property type="project" value="UniProtKB-UniRule"/>
</dbReference>
<dbReference type="CDD" id="cd02440">
    <property type="entry name" value="AdoMet_MTases"/>
    <property type="match status" value="1"/>
</dbReference>
<dbReference type="Gene3D" id="3.40.50.150">
    <property type="entry name" value="Vaccinia Virus protein VP39"/>
    <property type="match status" value="1"/>
</dbReference>
<dbReference type="HAMAP" id="MF_01547">
    <property type="entry name" value="RNA_methyltr_E"/>
    <property type="match status" value="1"/>
</dbReference>
<dbReference type="InterPro" id="IPR050082">
    <property type="entry name" value="RNA_methyltr_RlmE"/>
</dbReference>
<dbReference type="InterPro" id="IPR002877">
    <property type="entry name" value="RNA_MeTrfase_FtsJ_dom"/>
</dbReference>
<dbReference type="InterPro" id="IPR015507">
    <property type="entry name" value="rRNA-MeTfrase_E"/>
</dbReference>
<dbReference type="InterPro" id="IPR029063">
    <property type="entry name" value="SAM-dependent_MTases_sf"/>
</dbReference>
<dbReference type="PANTHER" id="PTHR10920">
    <property type="entry name" value="RIBOSOMAL RNA METHYLTRANSFERASE"/>
    <property type="match status" value="1"/>
</dbReference>
<dbReference type="PANTHER" id="PTHR10920:SF18">
    <property type="entry name" value="RRNA METHYLTRANSFERASE 2, MITOCHONDRIAL"/>
    <property type="match status" value="1"/>
</dbReference>
<dbReference type="Pfam" id="PF01728">
    <property type="entry name" value="FtsJ"/>
    <property type="match status" value="1"/>
</dbReference>
<dbReference type="PIRSF" id="PIRSF005461">
    <property type="entry name" value="23S_rRNA_mtase"/>
    <property type="match status" value="1"/>
</dbReference>
<dbReference type="SUPFAM" id="SSF53335">
    <property type="entry name" value="S-adenosyl-L-methionine-dependent methyltransferases"/>
    <property type="match status" value="1"/>
</dbReference>
<gene>
    <name evidence="1" type="primary">rlmE</name>
    <name evidence="1" type="synonym">ftsJ</name>
    <name evidence="1" type="synonym">rrmJ</name>
    <name type="ordered locus">Dole_0372</name>
</gene>
<feature type="chain" id="PRO_1000185293" description="Ribosomal RNA large subunit methyltransferase E">
    <location>
        <begin position="1"/>
        <end position="207"/>
    </location>
</feature>
<feature type="region of interest" description="Disordered" evidence="2">
    <location>
        <begin position="1"/>
        <end position="20"/>
    </location>
</feature>
<feature type="active site" description="Proton acceptor" evidence="1">
    <location>
        <position position="156"/>
    </location>
</feature>
<feature type="binding site" evidence="1">
    <location>
        <position position="56"/>
    </location>
    <ligand>
        <name>S-adenosyl-L-methionine</name>
        <dbReference type="ChEBI" id="CHEBI:59789"/>
    </ligand>
</feature>
<feature type="binding site" evidence="1">
    <location>
        <position position="58"/>
    </location>
    <ligand>
        <name>S-adenosyl-L-methionine</name>
        <dbReference type="ChEBI" id="CHEBI:59789"/>
    </ligand>
</feature>
<feature type="binding site" evidence="1">
    <location>
        <position position="76"/>
    </location>
    <ligand>
        <name>S-adenosyl-L-methionine</name>
        <dbReference type="ChEBI" id="CHEBI:59789"/>
    </ligand>
</feature>
<feature type="binding site" evidence="1">
    <location>
        <position position="94"/>
    </location>
    <ligand>
        <name>S-adenosyl-L-methionine</name>
        <dbReference type="ChEBI" id="CHEBI:59789"/>
    </ligand>
</feature>
<feature type="binding site" evidence="1">
    <location>
        <position position="116"/>
    </location>
    <ligand>
        <name>S-adenosyl-L-methionine</name>
        <dbReference type="ChEBI" id="CHEBI:59789"/>
    </ligand>
</feature>
<protein>
    <recommendedName>
        <fullName evidence="1">Ribosomal RNA large subunit methyltransferase E</fullName>
        <ecNumber evidence="1">2.1.1.166</ecNumber>
    </recommendedName>
    <alternativeName>
        <fullName evidence="1">23S rRNA Um2552 methyltransferase</fullName>
    </alternativeName>
    <alternativeName>
        <fullName evidence="1">rRNA (uridine-2'-O-)-methyltransferase</fullName>
    </alternativeName>
</protein>
<reference key="1">
    <citation type="submission" date="2007-10" db="EMBL/GenBank/DDBJ databases">
        <title>Complete sequence of Desulfococcus oleovorans Hxd3.</title>
        <authorList>
            <consortium name="US DOE Joint Genome Institute"/>
            <person name="Copeland A."/>
            <person name="Lucas S."/>
            <person name="Lapidus A."/>
            <person name="Barry K."/>
            <person name="Glavina del Rio T."/>
            <person name="Dalin E."/>
            <person name="Tice H."/>
            <person name="Pitluck S."/>
            <person name="Kiss H."/>
            <person name="Brettin T."/>
            <person name="Bruce D."/>
            <person name="Detter J.C."/>
            <person name="Han C."/>
            <person name="Schmutz J."/>
            <person name="Larimer F."/>
            <person name="Land M."/>
            <person name="Hauser L."/>
            <person name="Kyrpides N."/>
            <person name="Kim E."/>
            <person name="Wawrik B."/>
            <person name="Richardson P."/>
        </authorList>
    </citation>
    <scope>NUCLEOTIDE SEQUENCE [LARGE SCALE GENOMIC DNA]</scope>
    <source>
        <strain>DSM 6200 / JCM 39069 / Hxd3</strain>
    </source>
</reference>
<comment type="function">
    <text evidence="1">Specifically methylates the uridine in position 2552 of 23S rRNA at the 2'-O position of the ribose in the fully assembled 50S ribosomal subunit.</text>
</comment>
<comment type="catalytic activity">
    <reaction evidence="1">
        <text>uridine(2552) in 23S rRNA + S-adenosyl-L-methionine = 2'-O-methyluridine(2552) in 23S rRNA + S-adenosyl-L-homocysteine + H(+)</text>
        <dbReference type="Rhea" id="RHEA:42720"/>
        <dbReference type="Rhea" id="RHEA-COMP:10202"/>
        <dbReference type="Rhea" id="RHEA-COMP:10203"/>
        <dbReference type="ChEBI" id="CHEBI:15378"/>
        <dbReference type="ChEBI" id="CHEBI:57856"/>
        <dbReference type="ChEBI" id="CHEBI:59789"/>
        <dbReference type="ChEBI" id="CHEBI:65315"/>
        <dbReference type="ChEBI" id="CHEBI:74478"/>
        <dbReference type="EC" id="2.1.1.166"/>
    </reaction>
</comment>
<comment type="subcellular location">
    <subcellularLocation>
        <location evidence="1">Cytoplasm</location>
    </subcellularLocation>
</comment>
<comment type="similarity">
    <text evidence="1">Belongs to the class I-like SAM-binding methyltransferase superfamily. RNA methyltransferase RlmE family.</text>
</comment>
<accession>A8ZT18</accession>
<proteinExistence type="inferred from homology"/>